<feature type="chain" id="PRO_0000174688" description="Co-chaperonin GroES">
    <location>
        <begin position="1"/>
        <end position="94"/>
    </location>
</feature>
<name>CH10_BACAN</name>
<keyword id="KW-0143">Chaperone</keyword>
<keyword id="KW-0963">Cytoplasm</keyword>
<keyword id="KW-1185">Reference proteome</keyword>
<dbReference type="EMBL" id="AE016879">
    <property type="protein sequence ID" value="AAP24305.1"/>
    <property type="molecule type" value="Genomic_DNA"/>
</dbReference>
<dbReference type="EMBL" id="AE017334">
    <property type="protein sequence ID" value="AAT29349.1"/>
    <property type="molecule type" value="Genomic_DNA"/>
</dbReference>
<dbReference type="EMBL" id="AE017225">
    <property type="protein sequence ID" value="AAT52587.1"/>
    <property type="molecule type" value="Genomic_DNA"/>
</dbReference>
<dbReference type="RefSeq" id="NP_842819.1">
    <property type="nucleotide sequence ID" value="NC_003997.3"/>
</dbReference>
<dbReference type="RefSeq" id="WP_000917306.1">
    <property type="nucleotide sequence ID" value="NZ_WXXJ01000053.1"/>
</dbReference>
<dbReference type="RefSeq" id="YP_026536.1">
    <property type="nucleotide sequence ID" value="NC_005945.1"/>
</dbReference>
<dbReference type="SMR" id="Q81VE2"/>
<dbReference type="STRING" id="261594.GBAA_0266"/>
<dbReference type="DNASU" id="1084579"/>
<dbReference type="GeneID" id="93010771"/>
<dbReference type="KEGG" id="ban:BA_0266"/>
<dbReference type="KEGG" id="bar:GBAA_0266"/>
<dbReference type="KEGG" id="bat:BAS0252"/>
<dbReference type="PATRIC" id="fig|198094.11.peg.259"/>
<dbReference type="eggNOG" id="COG0234">
    <property type="taxonomic scope" value="Bacteria"/>
</dbReference>
<dbReference type="HOGENOM" id="CLU_132825_2_0_9"/>
<dbReference type="OMA" id="EDFLIMR"/>
<dbReference type="OrthoDB" id="9806791at2"/>
<dbReference type="Proteomes" id="UP000000427">
    <property type="component" value="Chromosome"/>
</dbReference>
<dbReference type="Proteomes" id="UP000000594">
    <property type="component" value="Chromosome"/>
</dbReference>
<dbReference type="GO" id="GO:0005737">
    <property type="term" value="C:cytoplasm"/>
    <property type="evidence" value="ECO:0007669"/>
    <property type="project" value="UniProtKB-SubCell"/>
</dbReference>
<dbReference type="GO" id="GO:0005524">
    <property type="term" value="F:ATP binding"/>
    <property type="evidence" value="ECO:0007669"/>
    <property type="project" value="InterPro"/>
</dbReference>
<dbReference type="GO" id="GO:0046872">
    <property type="term" value="F:metal ion binding"/>
    <property type="evidence" value="ECO:0007669"/>
    <property type="project" value="TreeGrafter"/>
</dbReference>
<dbReference type="GO" id="GO:0044183">
    <property type="term" value="F:protein folding chaperone"/>
    <property type="evidence" value="ECO:0007669"/>
    <property type="project" value="InterPro"/>
</dbReference>
<dbReference type="GO" id="GO:0051087">
    <property type="term" value="F:protein-folding chaperone binding"/>
    <property type="evidence" value="ECO:0007669"/>
    <property type="project" value="TreeGrafter"/>
</dbReference>
<dbReference type="GO" id="GO:0051082">
    <property type="term" value="F:unfolded protein binding"/>
    <property type="evidence" value="ECO:0007669"/>
    <property type="project" value="TreeGrafter"/>
</dbReference>
<dbReference type="GO" id="GO:0051085">
    <property type="term" value="P:chaperone cofactor-dependent protein refolding"/>
    <property type="evidence" value="ECO:0007669"/>
    <property type="project" value="TreeGrafter"/>
</dbReference>
<dbReference type="CDD" id="cd00320">
    <property type="entry name" value="cpn10"/>
    <property type="match status" value="1"/>
</dbReference>
<dbReference type="FunFam" id="2.30.33.40:FF:000001">
    <property type="entry name" value="10 kDa chaperonin"/>
    <property type="match status" value="1"/>
</dbReference>
<dbReference type="Gene3D" id="2.30.33.40">
    <property type="entry name" value="GroES chaperonin"/>
    <property type="match status" value="1"/>
</dbReference>
<dbReference type="HAMAP" id="MF_00580">
    <property type="entry name" value="CH10"/>
    <property type="match status" value="1"/>
</dbReference>
<dbReference type="InterPro" id="IPR020818">
    <property type="entry name" value="Chaperonin_GroES"/>
</dbReference>
<dbReference type="InterPro" id="IPR037124">
    <property type="entry name" value="Chaperonin_GroES_sf"/>
</dbReference>
<dbReference type="InterPro" id="IPR018369">
    <property type="entry name" value="Chaprnonin_Cpn10_CS"/>
</dbReference>
<dbReference type="InterPro" id="IPR011032">
    <property type="entry name" value="GroES-like_sf"/>
</dbReference>
<dbReference type="NCBIfam" id="NF001527">
    <property type="entry name" value="PRK00364.1-2"/>
    <property type="match status" value="1"/>
</dbReference>
<dbReference type="NCBIfam" id="NF001530">
    <property type="entry name" value="PRK00364.1-6"/>
    <property type="match status" value="1"/>
</dbReference>
<dbReference type="NCBIfam" id="NF001531">
    <property type="entry name" value="PRK00364.2-2"/>
    <property type="match status" value="1"/>
</dbReference>
<dbReference type="NCBIfam" id="NF001533">
    <property type="entry name" value="PRK00364.2-4"/>
    <property type="match status" value="1"/>
</dbReference>
<dbReference type="NCBIfam" id="NF001534">
    <property type="entry name" value="PRK00364.2-5"/>
    <property type="match status" value="1"/>
</dbReference>
<dbReference type="PANTHER" id="PTHR10772">
    <property type="entry name" value="10 KDA HEAT SHOCK PROTEIN"/>
    <property type="match status" value="1"/>
</dbReference>
<dbReference type="PANTHER" id="PTHR10772:SF58">
    <property type="entry name" value="CO-CHAPERONIN GROES"/>
    <property type="match status" value="1"/>
</dbReference>
<dbReference type="Pfam" id="PF00166">
    <property type="entry name" value="Cpn10"/>
    <property type="match status" value="1"/>
</dbReference>
<dbReference type="PRINTS" id="PR00297">
    <property type="entry name" value="CHAPERONIN10"/>
</dbReference>
<dbReference type="SMART" id="SM00883">
    <property type="entry name" value="Cpn10"/>
    <property type="match status" value="1"/>
</dbReference>
<dbReference type="SUPFAM" id="SSF50129">
    <property type="entry name" value="GroES-like"/>
    <property type="match status" value="1"/>
</dbReference>
<dbReference type="PROSITE" id="PS00681">
    <property type="entry name" value="CHAPERONINS_CPN10"/>
    <property type="match status" value="1"/>
</dbReference>
<protein>
    <recommendedName>
        <fullName evidence="1">Co-chaperonin GroES</fullName>
    </recommendedName>
    <alternativeName>
        <fullName evidence="1">10 kDa chaperonin</fullName>
    </alternativeName>
    <alternativeName>
        <fullName evidence="1">Chaperonin-10</fullName>
        <shortName evidence="1">Cpn10</shortName>
    </alternativeName>
</protein>
<reference key="1">
    <citation type="journal article" date="2003" name="Nature">
        <title>The genome sequence of Bacillus anthracis Ames and comparison to closely related bacteria.</title>
        <authorList>
            <person name="Read T.D."/>
            <person name="Peterson S.N."/>
            <person name="Tourasse N.J."/>
            <person name="Baillie L.W."/>
            <person name="Paulsen I.T."/>
            <person name="Nelson K.E."/>
            <person name="Tettelin H."/>
            <person name="Fouts D.E."/>
            <person name="Eisen J.A."/>
            <person name="Gill S.R."/>
            <person name="Holtzapple E.K."/>
            <person name="Okstad O.A."/>
            <person name="Helgason E."/>
            <person name="Rilstone J."/>
            <person name="Wu M."/>
            <person name="Kolonay J.F."/>
            <person name="Beanan M.J."/>
            <person name="Dodson R.J."/>
            <person name="Brinkac L.M."/>
            <person name="Gwinn M.L."/>
            <person name="DeBoy R.T."/>
            <person name="Madpu R."/>
            <person name="Daugherty S.C."/>
            <person name="Durkin A.S."/>
            <person name="Haft D.H."/>
            <person name="Nelson W.C."/>
            <person name="Peterson J.D."/>
            <person name="Pop M."/>
            <person name="Khouri H.M."/>
            <person name="Radune D."/>
            <person name="Benton J.L."/>
            <person name="Mahamoud Y."/>
            <person name="Jiang L."/>
            <person name="Hance I.R."/>
            <person name="Weidman J.F."/>
            <person name="Berry K.J."/>
            <person name="Plaut R.D."/>
            <person name="Wolf A.M."/>
            <person name="Watkins K.L."/>
            <person name="Nierman W.C."/>
            <person name="Hazen A."/>
            <person name="Cline R.T."/>
            <person name="Redmond C."/>
            <person name="Thwaite J.E."/>
            <person name="White O."/>
            <person name="Salzberg S.L."/>
            <person name="Thomason B."/>
            <person name="Friedlander A.M."/>
            <person name="Koehler T.M."/>
            <person name="Hanna P.C."/>
            <person name="Kolstoe A.-B."/>
            <person name="Fraser C.M."/>
        </authorList>
    </citation>
    <scope>NUCLEOTIDE SEQUENCE [LARGE SCALE GENOMIC DNA]</scope>
    <source>
        <strain>Ames / isolate Porton</strain>
    </source>
</reference>
<reference key="2">
    <citation type="journal article" date="2009" name="J. Bacteriol.">
        <title>The complete genome sequence of Bacillus anthracis Ames 'Ancestor'.</title>
        <authorList>
            <person name="Ravel J."/>
            <person name="Jiang L."/>
            <person name="Stanley S.T."/>
            <person name="Wilson M.R."/>
            <person name="Decker R.S."/>
            <person name="Read T.D."/>
            <person name="Worsham P."/>
            <person name="Keim P.S."/>
            <person name="Salzberg S.L."/>
            <person name="Fraser-Liggett C.M."/>
            <person name="Rasko D.A."/>
        </authorList>
    </citation>
    <scope>NUCLEOTIDE SEQUENCE [LARGE SCALE GENOMIC DNA]</scope>
    <source>
        <strain>Ames ancestor</strain>
    </source>
</reference>
<reference key="3">
    <citation type="submission" date="2004-01" db="EMBL/GenBank/DDBJ databases">
        <title>Complete genome sequence of Bacillus anthracis Sterne.</title>
        <authorList>
            <person name="Brettin T.S."/>
            <person name="Bruce D."/>
            <person name="Challacombe J.F."/>
            <person name="Gilna P."/>
            <person name="Han C."/>
            <person name="Hill K."/>
            <person name="Hitchcock P."/>
            <person name="Jackson P."/>
            <person name="Keim P."/>
            <person name="Longmire J."/>
            <person name="Lucas S."/>
            <person name="Okinaka R."/>
            <person name="Richardson P."/>
            <person name="Rubin E."/>
            <person name="Tice H."/>
        </authorList>
    </citation>
    <scope>NUCLEOTIDE SEQUENCE [LARGE SCALE GENOMIC DNA]</scope>
    <source>
        <strain>Sterne</strain>
    </source>
</reference>
<proteinExistence type="inferred from homology"/>
<evidence type="ECO:0000255" key="1">
    <source>
        <dbReference type="HAMAP-Rule" id="MF_00580"/>
    </source>
</evidence>
<organism>
    <name type="scientific">Bacillus anthracis</name>
    <dbReference type="NCBI Taxonomy" id="1392"/>
    <lineage>
        <taxon>Bacteria</taxon>
        <taxon>Bacillati</taxon>
        <taxon>Bacillota</taxon>
        <taxon>Bacilli</taxon>
        <taxon>Bacillales</taxon>
        <taxon>Bacillaceae</taxon>
        <taxon>Bacillus</taxon>
        <taxon>Bacillus cereus group</taxon>
    </lineage>
</organism>
<comment type="function">
    <text evidence="1">Together with the chaperonin GroEL, plays an essential role in assisting protein folding. The GroEL-GroES system forms a nano-cage that allows encapsulation of the non-native substrate proteins and provides a physical environment optimized to promote and accelerate protein folding. GroES binds to the apical surface of the GroEL ring, thereby capping the opening of the GroEL channel.</text>
</comment>
<comment type="subunit">
    <text evidence="1">Heptamer of 7 subunits arranged in a ring. Interacts with the chaperonin GroEL.</text>
</comment>
<comment type="subcellular location">
    <subcellularLocation>
        <location evidence="1">Cytoplasm</location>
    </subcellularLocation>
</comment>
<comment type="similarity">
    <text evidence="1">Belongs to the GroES chaperonin family.</text>
</comment>
<accession>Q81VE2</accession>
<accession>Q6I4E4</accession>
<accession>Q6KY47</accession>
<gene>
    <name evidence="1" type="primary">groES</name>
    <name evidence="1" type="synonym">groS</name>
    <name type="ordered locus">BA_0266</name>
    <name type="ordered locus">GBAA_0266</name>
    <name type="ordered locus">BAS0252</name>
</gene>
<sequence>MLKPLGDRVVIELVQAEEKTASGIVLPDTAKEKPQEGKVIAVGTGRVLENGERVALEVAAGDLIIFSKYAGTEVKYEGTDYLILRESDILAVIG</sequence>